<dbReference type="EC" id="3.11.1.1"/>
<dbReference type="EMBL" id="AF030979">
    <property type="protein sequence ID" value="AAB86434.2"/>
    <property type="status" value="ALT_INIT"/>
    <property type="molecule type" value="Genomic_DNA"/>
</dbReference>
<dbReference type="RefSeq" id="WP_000687366.1">
    <property type="nucleotide sequence ID" value="NZ_VKPB01000001.1"/>
</dbReference>
<dbReference type="PDB" id="1FEZ">
    <property type="method" value="X-ray"/>
    <property type="resolution" value="3.00 A"/>
    <property type="chains" value="A/B/C/D=2-257"/>
</dbReference>
<dbReference type="PDB" id="1RDF">
    <property type="method" value="X-ray"/>
    <property type="resolution" value="2.80 A"/>
    <property type="chains" value="A/B/C/D/E/F=1-264"/>
</dbReference>
<dbReference type="PDB" id="1RQL">
    <property type="method" value="X-ray"/>
    <property type="resolution" value="2.40 A"/>
    <property type="chains" value="A/B=1-264"/>
</dbReference>
<dbReference type="PDB" id="1RQN">
    <property type="method" value="X-ray"/>
    <property type="resolution" value="2.80 A"/>
    <property type="chains" value="A/B=1-264"/>
</dbReference>
<dbReference type="PDB" id="1SWV">
    <property type="method" value="X-ray"/>
    <property type="resolution" value="2.30 A"/>
    <property type="chains" value="A/B=1-264"/>
</dbReference>
<dbReference type="PDB" id="1SWW">
    <property type="method" value="X-ray"/>
    <property type="resolution" value="2.30 A"/>
    <property type="chains" value="A/B=1-264"/>
</dbReference>
<dbReference type="PDB" id="2IOF">
    <property type="method" value="X-ray"/>
    <property type="resolution" value="2.50 A"/>
    <property type="chains" value="A/K=1-264"/>
</dbReference>
<dbReference type="PDB" id="2IOH">
    <property type="method" value="X-ray"/>
    <property type="resolution" value="2.90 A"/>
    <property type="chains" value="A/B/C/D=1-264"/>
</dbReference>
<dbReference type="PDBsum" id="1FEZ"/>
<dbReference type="PDBsum" id="1RDF"/>
<dbReference type="PDBsum" id="1RQL"/>
<dbReference type="PDBsum" id="1RQN"/>
<dbReference type="PDBsum" id="1SWV"/>
<dbReference type="PDBsum" id="1SWW"/>
<dbReference type="PDBsum" id="2IOF"/>
<dbReference type="PDBsum" id="2IOH"/>
<dbReference type="SMR" id="O31156"/>
<dbReference type="DrugBank" id="DB03635">
    <property type="generic name" value="Ethanesulfonic acid"/>
</dbReference>
<dbReference type="DrugBank" id="DB03174">
    <property type="generic name" value="Phosphonoacetaldehyde"/>
</dbReference>
<dbReference type="DrugBank" id="DB04359">
    <property type="generic name" value="Vinylsulfonic acid"/>
</dbReference>
<dbReference type="PATRIC" id="fig|1396.434.peg.1664"/>
<dbReference type="BRENDA" id="3.11.1.1">
    <property type="organism ID" value="648"/>
</dbReference>
<dbReference type="SABIO-RK" id="O31156"/>
<dbReference type="EvolutionaryTrace" id="O31156"/>
<dbReference type="GO" id="GO:0005829">
    <property type="term" value="C:cytosol"/>
    <property type="evidence" value="ECO:0007669"/>
    <property type="project" value="TreeGrafter"/>
</dbReference>
<dbReference type="GO" id="GO:0000287">
    <property type="term" value="F:magnesium ion binding"/>
    <property type="evidence" value="ECO:0007669"/>
    <property type="project" value="UniProtKB-UniRule"/>
</dbReference>
<dbReference type="GO" id="GO:0008967">
    <property type="term" value="F:phosphoglycolate phosphatase activity"/>
    <property type="evidence" value="ECO:0007669"/>
    <property type="project" value="TreeGrafter"/>
</dbReference>
<dbReference type="GO" id="GO:0050194">
    <property type="term" value="F:phosphonoacetaldehyde hydrolase activity"/>
    <property type="evidence" value="ECO:0007669"/>
    <property type="project" value="UniProtKB-UniRule"/>
</dbReference>
<dbReference type="GO" id="GO:0006281">
    <property type="term" value="P:DNA repair"/>
    <property type="evidence" value="ECO:0007669"/>
    <property type="project" value="TreeGrafter"/>
</dbReference>
<dbReference type="GO" id="GO:0019700">
    <property type="term" value="P:organic phosphonate catabolic process"/>
    <property type="evidence" value="ECO:0007669"/>
    <property type="project" value="InterPro"/>
</dbReference>
<dbReference type="CDD" id="cd02586">
    <property type="entry name" value="HAD_PHN"/>
    <property type="match status" value="1"/>
</dbReference>
<dbReference type="FunFam" id="1.10.150.240:FF:000006">
    <property type="entry name" value="Phosphonoacetaldehyde hydrolase"/>
    <property type="match status" value="1"/>
</dbReference>
<dbReference type="FunFam" id="3.40.50.1000:FF:000072">
    <property type="entry name" value="Phosphonoacetaldehyde hydrolase"/>
    <property type="match status" value="1"/>
</dbReference>
<dbReference type="Gene3D" id="3.40.50.1000">
    <property type="entry name" value="HAD superfamily/HAD-like"/>
    <property type="match status" value="1"/>
</dbReference>
<dbReference type="Gene3D" id="1.10.150.240">
    <property type="entry name" value="Putative phosphatase, domain 2"/>
    <property type="match status" value="1"/>
</dbReference>
<dbReference type="HAMAP" id="MF_01375">
    <property type="entry name" value="PhnX"/>
    <property type="match status" value="1"/>
</dbReference>
<dbReference type="InterPro" id="IPR050155">
    <property type="entry name" value="HAD-like_hydrolase_sf"/>
</dbReference>
<dbReference type="InterPro" id="IPR036412">
    <property type="entry name" value="HAD-like_sf"/>
</dbReference>
<dbReference type="InterPro" id="IPR006439">
    <property type="entry name" value="HAD-SF_hydro_IA"/>
</dbReference>
<dbReference type="InterPro" id="IPR023214">
    <property type="entry name" value="HAD_sf"/>
</dbReference>
<dbReference type="InterPro" id="IPR023198">
    <property type="entry name" value="PGP-like_dom2"/>
</dbReference>
<dbReference type="InterPro" id="IPR006323">
    <property type="entry name" value="Phosphonoacetald_hydro"/>
</dbReference>
<dbReference type="NCBIfam" id="TIGR01549">
    <property type="entry name" value="HAD-SF-IA-v1"/>
    <property type="match status" value="1"/>
</dbReference>
<dbReference type="NCBIfam" id="TIGR01509">
    <property type="entry name" value="HAD-SF-IA-v3"/>
    <property type="match status" value="1"/>
</dbReference>
<dbReference type="NCBIfam" id="TIGR01422">
    <property type="entry name" value="phosphonatase"/>
    <property type="match status" value="1"/>
</dbReference>
<dbReference type="PANTHER" id="PTHR43434">
    <property type="entry name" value="PHOSPHOGLYCOLATE PHOSPHATASE"/>
    <property type="match status" value="1"/>
</dbReference>
<dbReference type="PANTHER" id="PTHR43434:SF19">
    <property type="entry name" value="PHOSPHONOACETALDEHYDE HYDROLASE"/>
    <property type="match status" value="1"/>
</dbReference>
<dbReference type="Pfam" id="PF00702">
    <property type="entry name" value="Hydrolase"/>
    <property type="match status" value="1"/>
</dbReference>
<dbReference type="SFLD" id="SFLDS00003">
    <property type="entry name" value="Haloacid_Dehalogenase"/>
    <property type="match status" value="1"/>
</dbReference>
<dbReference type="SFLD" id="SFLDF00038">
    <property type="entry name" value="phosphonoacetaldehyde_hydrolas"/>
    <property type="match status" value="1"/>
</dbReference>
<dbReference type="SUPFAM" id="SSF56784">
    <property type="entry name" value="HAD-like"/>
    <property type="match status" value="1"/>
</dbReference>
<keyword id="KW-0002">3D-structure</keyword>
<keyword id="KW-0903">Direct protein sequencing</keyword>
<keyword id="KW-0378">Hydrolase</keyword>
<keyword id="KW-0460">Magnesium</keyword>
<keyword id="KW-0479">Metal-binding</keyword>
<keyword id="KW-0704">Schiff base</keyword>
<accession>O31156</accession>
<name>PHNX_BACCE</name>
<sequence length="264" mass="30060">MKIEAVIFDWAGTTVDYGCFAPLEVFMEIFHKRGVAITAEEARKPMGLLKIDHVRALTEMPRIASEWNRVFRQLPTEADIQEMYEEFEEILFAILPRYASPINGVKEVIASLRERGIKIGSTTGYTREMMDIVAKEAALQGYKPDFLVTPDDVPAGRPYPWMCYKNAMELGVYPMNHMIKVGDTVSDMKEGRNAGMWTVGVILGSSELGLTEEEVENMDSVELREKIEVVRNRFVENGAHFTIETMQELESVMEHIEKQELIIS</sequence>
<protein>
    <recommendedName>
        <fullName>Phosphonoacetaldehyde hydrolase</fullName>
        <shortName>Phosphonatase</shortName>
        <ecNumber>3.11.1.1</ecNumber>
    </recommendedName>
    <alternativeName>
        <fullName>Phosphonoacetaldehyde phosphonohydrolase</fullName>
    </alternativeName>
</protein>
<feature type="chain" id="PRO_0000284575" description="Phosphonoacetaldehyde hydrolase">
    <location>
        <begin position="1"/>
        <end position="264"/>
    </location>
</feature>
<feature type="active site" description="Nucleophile">
    <location>
        <position position="9"/>
    </location>
</feature>
<feature type="active site" description="Schiff-base intermediate with substrate">
    <location>
        <position position="50"/>
    </location>
</feature>
<feature type="binding site">
    <location>
        <position position="9"/>
    </location>
    <ligand>
        <name>Mg(2+)</name>
        <dbReference type="ChEBI" id="CHEBI:18420"/>
    </ligand>
</feature>
<feature type="binding site">
    <location>
        <position position="11"/>
    </location>
    <ligand>
        <name>Mg(2+)</name>
        <dbReference type="ChEBI" id="CHEBI:18420"/>
    </ligand>
</feature>
<feature type="binding site">
    <location>
        <position position="183"/>
    </location>
    <ligand>
        <name>Mg(2+)</name>
        <dbReference type="ChEBI" id="CHEBI:18420"/>
    </ligand>
</feature>
<feature type="mutagenesis site" description="Loss of enzymatic activity." evidence="2 5">
    <original>D</original>
    <variation>A</variation>
    <location>
        <position position="9"/>
    </location>
</feature>
<feature type="mutagenesis site" description="Kcat/KM decreases 30000-fold." evidence="2 5">
    <original>D</original>
    <variation>E</variation>
    <location>
        <position position="9"/>
    </location>
</feature>
<feature type="mutagenesis site" description="Kcat/KM decreases 10-100-fold." evidence="3">
    <original>C</original>
    <variation>A</variation>
    <variation>S</variation>
    <location>
        <position position="19"/>
    </location>
</feature>
<feature type="mutagenesis site" description="Kcat/KM decreases 17000-fold." evidence="3">
    <original>M</original>
    <variation>L</variation>
    <location>
        <position position="46"/>
    </location>
</feature>
<feature type="mutagenesis site" description="Kcat/KM decreases 10000-fold." evidence="4">
    <original>G</original>
    <variation>A</variation>
    <location>
        <position position="47"/>
    </location>
</feature>
<feature type="mutagenesis site" description="Loss of enzymatic activity." evidence="4">
    <original>G</original>
    <variation>P</variation>
    <variation>V</variation>
    <location>
        <position position="47"/>
    </location>
</feature>
<feature type="mutagenesis site" description="Loss of enzymatic activity." evidence="4">
    <original>K</original>
    <variation>R</variation>
    <location>
        <position position="50"/>
    </location>
</feature>
<feature type="mutagenesis site" description="Kcat/KM decreases 1000-fold." evidence="3 6">
    <original>H</original>
    <variation>A</variation>
    <location>
        <position position="53"/>
    </location>
</feature>
<feature type="mutagenesis site" description="Kcat/KM decreases 250-fold." evidence="3 6">
    <original>H</original>
    <variation>Q</variation>
    <location>
        <position position="53"/>
    </location>
</feature>
<feature type="mutagenesis site" description="Kcat/KM decreases 230-fold." evidence="3">
    <original>Y</original>
    <variation>A</variation>
    <location>
        <position position="125"/>
    </location>
</feature>
<feature type="mutagenesis site" description="Kcat/KM decreases 10-fold." evidence="3">
    <original>Y</original>
    <variation>F</variation>
    <location>
        <position position="125"/>
    </location>
</feature>
<feature type="mutagenesis site" description="Loss of enzymatic activity." evidence="5">
    <original>D</original>
    <variation>A</variation>
    <location>
        <position position="183"/>
    </location>
</feature>
<feature type="mutagenesis site" description="Kcat/KM decreases 10000-fold." evidence="5">
    <original>D</original>
    <variation>A</variation>
    <location>
        <position position="187"/>
    </location>
</feature>
<feature type="strand" evidence="9">
    <location>
        <begin position="5"/>
        <end position="8"/>
    </location>
</feature>
<feature type="turn" evidence="9">
    <location>
        <begin position="11"/>
        <end position="13"/>
    </location>
</feature>
<feature type="strand" evidence="9">
    <location>
        <begin position="14"/>
        <end position="16"/>
    </location>
</feature>
<feature type="helix" evidence="9">
    <location>
        <begin position="23"/>
        <end position="31"/>
    </location>
</feature>
<feature type="turn" evidence="9">
    <location>
        <begin position="32"/>
        <end position="34"/>
    </location>
</feature>
<feature type="helix" evidence="9">
    <location>
        <begin position="39"/>
        <end position="43"/>
    </location>
</feature>
<feature type="turn" evidence="9">
    <location>
        <begin position="44"/>
        <end position="47"/>
    </location>
</feature>
<feature type="helix" evidence="9">
    <location>
        <begin position="50"/>
        <end position="59"/>
    </location>
</feature>
<feature type="helix" evidence="9">
    <location>
        <begin position="61"/>
        <end position="71"/>
    </location>
</feature>
<feature type="helix" evidence="9">
    <location>
        <begin position="77"/>
        <end position="94"/>
    </location>
</feature>
<feature type="helix" evidence="9">
    <location>
        <begin position="95"/>
        <end position="98"/>
    </location>
</feature>
<feature type="helix" evidence="9">
    <location>
        <begin position="105"/>
        <end position="114"/>
    </location>
</feature>
<feature type="strand" evidence="9">
    <location>
        <begin position="118"/>
        <end position="122"/>
    </location>
</feature>
<feature type="helix" evidence="9">
    <location>
        <begin position="127"/>
        <end position="139"/>
    </location>
</feature>
<feature type="strand" evidence="10">
    <location>
        <begin position="145"/>
        <end position="147"/>
    </location>
</feature>
<feature type="helix" evidence="9">
    <location>
        <begin position="150"/>
        <end position="152"/>
    </location>
</feature>
<feature type="strand" evidence="8">
    <location>
        <begin position="153"/>
        <end position="155"/>
    </location>
</feature>
<feature type="strand" evidence="11">
    <location>
        <begin position="157"/>
        <end position="160"/>
    </location>
</feature>
<feature type="helix" evidence="9">
    <location>
        <begin position="161"/>
        <end position="170"/>
    </location>
</feature>
<feature type="helix" evidence="9">
    <location>
        <begin position="175"/>
        <end position="177"/>
    </location>
</feature>
<feature type="strand" evidence="9">
    <location>
        <begin position="178"/>
        <end position="184"/>
    </location>
</feature>
<feature type="helix" evidence="9">
    <location>
        <begin position="185"/>
        <end position="193"/>
    </location>
</feature>
<feature type="strand" evidence="9">
    <location>
        <begin position="196"/>
        <end position="201"/>
    </location>
</feature>
<feature type="turn" evidence="9">
    <location>
        <begin position="206"/>
        <end position="208"/>
    </location>
</feature>
<feature type="helix" evidence="9">
    <location>
        <begin position="212"/>
        <end position="217"/>
    </location>
</feature>
<feature type="helix" evidence="9">
    <location>
        <begin position="220"/>
        <end position="236"/>
    </location>
</feature>
<feature type="strand" evidence="9">
    <location>
        <begin position="240"/>
        <end position="245"/>
    </location>
</feature>
<feature type="helix" evidence="9">
    <location>
        <begin position="246"/>
        <end position="248"/>
    </location>
</feature>
<feature type="helix" evidence="9">
    <location>
        <begin position="249"/>
        <end position="256"/>
    </location>
</feature>
<evidence type="ECO:0000269" key="1">
    <source>
    </source>
</evidence>
<evidence type="ECO:0000269" key="2">
    <source>
    </source>
</evidence>
<evidence type="ECO:0000269" key="3">
    <source>
    </source>
</evidence>
<evidence type="ECO:0000269" key="4">
    <source>
    </source>
</evidence>
<evidence type="ECO:0000269" key="5">
    <source>
    </source>
</evidence>
<evidence type="ECO:0000269" key="6">
    <source>
    </source>
</evidence>
<evidence type="ECO:0000305" key="7"/>
<evidence type="ECO:0007829" key="8">
    <source>
        <dbReference type="PDB" id="1RDF"/>
    </source>
</evidence>
<evidence type="ECO:0007829" key="9">
    <source>
        <dbReference type="PDB" id="1SWV"/>
    </source>
</evidence>
<evidence type="ECO:0007829" key="10">
    <source>
        <dbReference type="PDB" id="2IOF"/>
    </source>
</evidence>
<evidence type="ECO:0007829" key="11">
    <source>
        <dbReference type="PDB" id="2IOH"/>
    </source>
</evidence>
<gene>
    <name type="primary">phnX</name>
</gene>
<reference key="1">
    <citation type="journal article" date="1998" name="Biochemistry">
        <title>Insights into the mechanism of catalysis by the P-C bond-cleaving enzyme phosphonoacetaldehyde hydrolase derived from gene sequence analysis and mutagenesis.</title>
        <authorList>
            <person name="Baker A.S."/>
            <person name="Ciocci M.J."/>
            <person name="Metcalf W.W."/>
            <person name="Kim J."/>
            <person name="Babbitt P.C."/>
            <person name="Wanner B.L."/>
            <person name="Martin B.M."/>
            <person name="Dunaway-Mariano D."/>
        </authorList>
    </citation>
    <scope>NUCLEOTIDE SEQUENCE [GENOMIC DNA]</scope>
    <scope>PROTEIN SEQUENCE OF 1-17 AND 35-55</scope>
    <scope>REACTION MECHANISM</scope>
    <scope>BIOPHYSICAL CHARACTERIZATION</scope>
    <source>
        <strain>ATCC 43881 / AI-2</strain>
    </source>
</reference>
<reference key="2">
    <citation type="journal article" date="1992" name="Arch. Biochem. Biophys.">
        <title>Investigation of the substrate binding and catalytic groups of the P-C bond cleaving enzyme, phosphonoacetaldehyde hydrolase.</title>
        <authorList>
            <person name="Olsen D.B."/>
            <person name="Hepburn T.W."/>
            <person name="Lee S.-L."/>
            <person name="Martin B.M."/>
            <person name="Mariano P.S."/>
            <person name="Dunaway-Mariano D."/>
        </authorList>
    </citation>
    <scope>PROTEIN SEQUENCE OF 34-55</scope>
    <scope>SCHIFF BASE</scope>
    <scope>REACTION MECHANISM</scope>
    <source>
        <strain>ATCC 43881 / AI-2</strain>
    </source>
</reference>
<reference key="3">
    <citation type="journal article" date="2000" name="Acta Crystallogr. D">
        <title>Crystallization and preliminary crystallographic analysis of phosphonoacetaldehyde hydrolase.</title>
        <authorList>
            <person name="Morais M.C."/>
            <person name="Baker A.S."/>
            <person name="Dunaway-Mariano D."/>
            <person name="Allen K.N."/>
        </authorList>
    </citation>
    <scope>SUBUNIT</scope>
    <scope>PRELIMINARY CRYSTALLOGRAPHY</scope>
    <source>
        <strain>ATCC 43881 / AI-2</strain>
    </source>
</reference>
<reference key="4">
    <citation type="journal article" date="2000" name="Biochemistry">
        <title>The crystal structure of Bacillus cereus phosphonoacetaldehyde hydrolase: insight into catalysis of phosphorus bond cleavage and catalytic diversification within the HAD enzyme superfamily.</title>
        <authorList>
            <person name="Morais M.C."/>
            <person name="Zhang W."/>
            <person name="Baker A.S."/>
            <person name="Zhang G."/>
            <person name="Dunaway-Mariano D."/>
            <person name="Allen K.N."/>
        </authorList>
    </citation>
    <scope>X-RAY CRYSTALLOGRAPHY (3.0 ANGSTROMS) OF 2-260 IN COMPLEX WITH THE PHOSPHATE ANALOG TUNGSTATE</scope>
    <scope>BINDING OF MAGNESIUM</scope>
    <scope>MUTAGENESIS OF ASP-9</scope>
    <source>
        <strain>ATCC 43881 / AI-2</strain>
    </source>
</reference>
<reference key="5">
    <citation type="journal article" date="2004" name="J. Biol. Chem.">
        <title>X-ray crystallographic and site-directed mutagenesis analysis of the mechanism of Schiff-base formation in phosphonoacetaldehyde hydrolase catalysis.</title>
        <authorList>
            <person name="Morais M.C."/>
            <person name="Zhang G."/>
            <person name="Zhang W."/>
            <person name="Olsen D.B."/>
            <person name="Dunaway-Mariano D."/>
            <person name="Allen K.N."/>
        </authorList>
    </citation>
    <scope>X-RAY CRYSTALLOGRAPHY (2.4 ANGSTROMS) IN COMPLEX WITH MG(2+) AND WITH MG(2+) PLUS VINYLSULFONATE</scope>
    <scope>MUTAGENESIS OF CYS-19; MET-46; HIS-53 AND TYR-125</scope>
    <source>
        <strain>ATCC 43881 / AI-2</strain>
    </source>
</reference>
<reference key="6">
    <citation type="journal article" date="2004" name="Biochemistry">
        <title>Analysis of the substrate specificity loop of the HAD superfamily cap domain.</title>
        <authorList>
            <person name="Lahiri S.D."/>
            <person name="Zhang G."/>
            <person name="Dai J."/>
            <person name="Dunaway-Mariano D."/>
            <person name="Allen K.N."/>
        </authorList>
    </citation>
    <scope>X-RAY CRYSTALLOGRAPHY (2.8 ANGSTROMS) OF MUTANT PRO-47</scope>
    <scope>MUTAGENESIS OF GLY-47 AND LYS-50</scope>
    <source>
        <strain>ATCC 43881 / AI-2</strain>
    </source>
</reference>
<reference key="7">
    <citation type="journal article" date="2004" name="Biochemistry">
        <title>Investigation of metal ion binding in phosphonoacetaldehyde hydrolase identifies sequence markers for metal-activated enzymes of the HAD enzyme superfamily.</title>
        <authorList>
            <person name="Zhang G."/>
            <person name="Morais M.C."/>
            <person name="Dai J."/>
            <person name="Zhang W."/>
            <person name="Dunaway-Mariano D."/>
            <person name="Allen K.N."/>
        </authorList>
    </citation>
    <scope>X-RAY CRYSTALLOGRAPHY (2.3 ANGSTROMS) OF MUTANT ALA-9 IN COMPLEX WITH MG(2+) AND WITH MG(2+) PLUS PHOSPHONOACETALDEHYDE</scope>
    <scope>MUTAGENESIS OF ASP-9; ASP-183 AND ASP-187</scope>
    <source>
        <strain>ATCC 43881 / AI-2</strain>
    </source>
</reference>
<reference key="8">
    <citation type="journal article" date="2006" name="Bioorg. Chem.">
        <title>Diversification of function in the haloacid dehalogenase enzyme superfamily: the role of the cap domain in hydrolytic phosphorus-carbon bond cleavage.</title>
        <authorList>
            <person name="Lahiri S.D."/>
            <person name="Zhang G."/>
            <person name="Dunaway-Mariano D."/>
            <person name="Allen K.N."/>
        </authorList>
    </citation>
    <scope>X-RAY CRYSTALLOGRAPHY (2.9 ANGSTROMS) OF MUTANT ARG-50</scope>
    <scope>MUTAGENESIS OF HIS-53</scope>
    <source>
        <strain>ATCC 43881 / AI-2</strain>
    </source>
</reference>
<comment type="function">
    <text>Involved in phosphonate degradation.</text>
</comment>
<comment type="catalytic activity">
    <reaction>
        <text>phosphonoacetaldehyde + H2O = acetaldehyde + phosphate + H(+)</text>
        <dbReference type="Rhea" id="RHEA:18905"/>
        <dbReference type="ChEBI" id="CHEBI:15343"/>
        <dbReference type="ChEBI" id="CHEBI:15377"/>
        <dbReference type="ChEBI" id="CHEBI:15378"/>
        <dbReference type="ChEBI" id="CHEBI:43474"/>
        <dbReference type="ChEBI" id="CHEBI:58383"/>
        <dbReference type="EC" id="3.11.1.1"/>
    </reaction>
</comment>
<comment type="cofactor">
    <cofactor>
        <name>Mg(2+)</name>
        <dbReference type="ChEBI" id="CHEBI:18420"/>
    </cofactor>
    <text>Binds 1 Mg(2+) ion per subunit.</text>
</comment>
<comment type="biophysicochemical properties">
    <kinetics>
        <KM>33 uM for phosphonoacetaldehyde (at pH 7.0, 25 degrees Celsius)</KM>
    </kinetics>
</comment>
<comment type="subunit">
    <text evidence="1 2 3 5">Homodimer.</text>
</comment>
<comment type="similarity">
    <text evidence="7">Belongs to the HAD-like hydrolase superfamily. PhnX family.</text>
</comment>
<comment type="sequence caution" evidence="7">
    <conflict type="erroneous initiation">
        <sequence resource="EMBL-CDS" id="AAB86434"/>
    </conflict>
</comment>
<organism>
    <name type="scientific">Bacillus cereus</name>
    <dbReference type="NCBI Taxonomy" id="1396"/>
    <lineage>
        <taxon>Bacteria</taxon>
        <taxon>Bacillati</taxon>
        <taxon>Bacillota</taxon>
        <taxon>Bacilli</taxon>
        <taxon>Bacillales</taxon>
        <taxon>Bacillaceae</taxon>
        <taxon>Bacillus</taxon>
        <taxon>Bacillus cereus group</taxon>
    </lineage>
</organism>
<proteinExistence type="evidence at protein level"/>